<sequence length="424" mass="47123">MRDSSTTASTKSSPLWKPFASNCCSVDDQTVFGNLSRCRPSRSEFSKNHLGPLPSFRRLSFADLSRSSSARINEDLAQTLGADLVDFQMCELKMITQSFSGNYLLGEGGFGKVYKGYVDDYLRQSLKAQPVAVKLLDIEGLQGHREWLSEVIFLGQLKHPNLVKLIGYCCEEEERVLIYEFMPRGSLENHLFRRISLSLPWATRLKIAVAAAKGLAFLHDLESPIIYRDFKTSNILLDSDFTAKLSDFGLAKMGPEGSKSHVTTRVMGTYGYAAPEYVSTGHLTTKSDVYSYGVVLLELLTGRRATEKSRPKNQQNIIDWSKPYLTSSRRLRCVMDPRLAGQYSVKAAKDTALLALQCVSPNPKDRPKMLAVVEALESLIHYKDMAVSSGHWPLSPKSQGGKVSPKVRGDHRSGRKSAPGSLRS</sequence>
<proteinExistence type="evidence at protein level"/>
<evidence type="ECO:0000250" key="1">
    <source>
        <dbReference type="UniProtKB" id="O48814"/>
    </source>
</evidence>
<evidence type="ECO:0000250" key="2">
    <source>
        <dbReference type="UniProtKB" id="Q9ZUF4"/>
    </source>
</evidence>
<evidence type="ECO:0000255" key="3">
    <source>
        <dbReference type="PROSITE-ProRule" id="PRU00159"/>
    </source>
</evidence>
<evidence type="ECO:0000256" key="4">
    <source>
        <dbReference type="SAM" id="MobiDB-lite"/>
    </source>
</evidence>
<evidence type="ECO:0000269" key="5">
    <source>
    </source>
</evidence>
<evidence type="ECO:0000303" key="6">
    <source>
    </source>
</evidence>
<evidence type="ECO:0000303" key="7">
    <source>
    </source>
</evidence>
<evidence type="ECO:0000305" key="8"/>
<evidence type="ECO:0000312" key="9">
    <source>
        <dbReference type="Araport" id="AT1G61590"/>
    </source>
</evidence>
<evidence type="ECO:0000312" key="10">
    <source>
        <dbReference type="EMBL" id="AAD25546.1"/>
    </source>
</evidence>
<dbReference type="EC" id="2.7.11.1" evidence="8"/>
<dbReference type="EMBL" id="AC005850">
    <property type="protein sequence ID" value="AAD25546.1"/>
    <property type="molecule type" value="Genomic_DNA"/>
</dbReference>
<dbReference type="EMBL" id="CP002684">
    <property type="protein sequence ID" value="AEE33860.1"/>
    <property type="molecule type" value="Genomic_DNA"/>
</dbReference>
<dbReference type="EMBL" id="AY064142">
    <property type="protein sequence ID" value="AAL36049.1"/>
    <property type="molecule type" value="mRNA"/>
</dbReference>
<dbReference type="EMBL" id="AY097413">
    <property type="protein sequence ID" value="AAM19929.1"/>
    <property type="molecule type" value="mRNA"/>
</dbReference>
<dbReference type="PIR" id="C96641">
    <property type="entry name" value="C96641"/>
</dbReference>
<dbReference type="RefSeq" id="NP_176353.1">
    <property type="nucleotide sequence ID" value="NM_104841.3"/>
</dbReference>
<dbReference type="SMR" id="Q9SY91"/>
<dbReference type="FunCoup" id="Q9SY91">
    <property type="interactions" value="2010"/>
</dbReference>
<dbReference type="IntAct" id="Q9SY91">
    <property type="interactions" value="8"/>
</dbReference>
<dbReference type="STRING" id="3702.Q9SY91"/>
<dbReference type="iPTMnet" id="Q9SY91"/>
<dbReference type="PaxDb" id="3702-AT1G61590.1"/>
<dbReference type="ProteomicsDB" id="236843"/>
<dbReference type="EnsemblPlants" id="AT1G61590.1">
    <property type="protein sequence ID" value="AT1G61590.1"/>
    <property type="gene ID" value="AT1G61590"/>
</dbReference>
<dbReference type="GeneID" id="842455"/>
<dbReference type="Gramene" id="AT1G61590.1">
    <property type="protein sequence ID" value="AT1G61590.1"/>
    <property type="gene ID" value="AT1G61590"/>
</dbReference>
<dbReference type="KEGG" id="ath:AT1G61590"/>
<dbReference type="Araport" id="AT1G61590"/>
<dbReference type="TAIR" id="AT1G61590">
    <property type="gene designation" value="PBL15"/>
</dbReference>
<dbReference type="eggNOG" id="KOG1187">
    <property type="taxonomic scope" value="Eukaryota"/>
</dbReference>
<dbReference type="HOGENOM" id="CLU_000288_21_2_1"/>
<dbReference type="InParanoid" id="Q9SY91"/>
<dbReference type="OMA" id="KPFTANC"/>
<dbReference type="PhylomeDB" id="Q9SY91"/>
<dbReference type="PRO" id="PR:Q9SY91"/>
<dbReference type="Proteomes" id="UP000006548">
    <property type="component" value="Chromosome 1"/>
</dbReference>
<dbReference type="ExpressionAtlas" id="Q9SY91">
    <property type="expression patterns" value="baseline and differential"/>
</dbReference>
<dbReference type="GO" id="GO:0005886">
    <property type="term" value="C:plasma membrane"/>
    <property type="evidence" value="ECO:0000314"/>
    <property type="project" value="TAIR"/>
</dbReference>
<dbReference type="GO" id="GO:0005524">
    <property type="term" value="F:ATP binding"/>
    <property type="evidence" value="ECO:0007669"/>
    <property type="project" value="UniProtKB-KW"/>
</dbReference>
<dbReference type="GO" id="GO:0016301">
    <property type="term" value="F:kinase activity"/>
    <property type="evidence" value="ECO:0000314"/>
    <property type="project" value="TAIR"/>
</dbReference>
<dbReference type="GO" id="GO:0106310">
    <property type="term" value="F:protein serine kinase activity"/>
    <property type="evidence" value="ECO:0007669"/>
    <property type="project" value="RHEA"/>
</dbReference>
<dbReference type="GO" id="GO:0004674">
    <property type="term" value="F:protein serine/threonine kinase activity"/>
    <property type="evidence" value="ECO:0007669"/>
    <property type="project" value="UniProtKB-KW"/>
</dbReference>
<dbReference type="GO" id="GO:0006952">
    <property type="term" value="P:defense response"/>
    <property type="evidence" value="ECO:0007669"/>
    <property type="project" value="UniProtKB-KW"/>
</dbReference>
<dbReference type="GO" id="GO:1901141">
    <property type="term" value="P:regulation of lignin biosynthetic process"/>
    <property type="evidence" value="ECO:0000315"/>
    <property type="project" value="TAIR"/>
</dbReference>
<dbReference type="CDD" id="cd14066">
    <property type="entry name" value="STKc_IRAK"/>
    <property type="match status" value="1"/>
</dbReference>
<dbReference type="FunFam" id="3.30.200.20:FF:000228">
    <property type="entry name" value="Serine/threonine-protein kinase BIK1"/>
    <property type="match status" value="1"/>
</dbReference>
<dbReference type="FunFam" id="1.10.510.10:FF:000032">
    <property type="entry name" value="Serine/threonine-protein kinase PBS1"/>
    <property type="match status" value="1"/>
</dbReference>
<dbReference type="Gene3D" id="3.30.200.20">
    <property type="entry name" value="Phosphorylase Kinase, domain 1"/>
    <property type="match status" value="1"/>
</dbReference>
<dbReference type="Gene3D" id="1.10.510.10">
    <property type="entry name" value="Transferase(Phosphotransferase) domain 1"/>
    <property type="match status" value="1"/>
</dbReference>
<dbReference type="InterPro" id="IPR011009">
    <property type="entry name" value="Kinase-like_dom_sf"/>
</dbReference>
<dbReference type="InterPro" id="IPR050823">
    <property type="entry name" value="Plant_Ser_Thr_Prot_Kinase"/>
</dbReference>
<dbReference type="InterPro" id="IPR000719">
    <property type="entry name" value="Prot_kinase_dom"/>
</dbReference>
<dbReference type="InterPro" id="IPR017441">
    <property type="entry name" value="Protein_kinase_ATP_BS"/>
</dbReference>
<dbReference type="InterPro" id="IPR001245">
    <property type="entry name" value="Ser-Thr/Tyr_kinase_cat_dom"/>
</dbReference>
<dbReference type="InterPro" id="IPR008271">
    <property type="entry name" value="Ser/Thr_kinase_AS"/>
</dbReference>
<dbReference type="PANTHER" id="PTHR45621">
    <property type="entry name" value="OS01G0588500 PROTEIN-RELATED"/>
    <property type="match status" value="1"/>
</dbReference>
<dbReference type="Pfam" id="PF07714">
    <property type="entry name" value="PK_Tyr_Ser-Thr"/>
    <property type="match status" value="1"/>
</dbReference>
<dbReference type="SUPFAM" id="SSF56112">
    <property type="entry name" value="Protein kinase-like (PK-like)"/>
    <property type="match status" value="1"/>
</dbReference>
<dbReference type="PROSITE" id="PS00107">
    <property type="entry name" value="PROTEIN_KINASE_ATP"/>
    <property type="match status" value="1"/>
</dbReference>
<dbReference type="PROSITE" id="PS50011">
    <property type="entry name" value="PROTEIN_KINASE_DOM"/>
    <property type="match status" value="1"/>
</dbReference>
<dbReference type="PROSITE" id="PS00108">
    <property type="entry name" value="PROTEIN_KINASE_ST"/>
    <property type="match status" value="1"/>
</dbReference>
<gene>
    <name evidence="6" type="primary">PBL15</name>
    <name evidence="7" type="synonym">PIX1</name>
    <name evidence="9" type="ordered locus">At1g61590</name>
    <name evidence="10" type="ORF">T25B24.6</name>
</gene>
<organism>
    <name type="scientific">Arabidopsis thaliana</name>
    <name type="common">Mouse-ear cress</name>
    <dbReference type="NCBI Taxonomy" id="3702"/>
    <lineage>
        <taxon>Eukaryota</taxon>
        <taxon>Viridiplantae</taxon>
        <taxon>Streptophyta</taxon>
        <taxon>Embryophyta</taxon>
        <taxon>Tracheophyta</taxon>
        <taxon>Spermatophyta</taxon>
        <taxon>Magnoliopsida</taxon>
        <taxon>eudicotyledons</taxon>
        <taxon>Gunneridae</taxon>
        <taxon>Pentapetalae</taxon>
        <taxon>rosids</taxon>
        <taxon>malvids</taxon>
        <taxon>Brassicales</taxon>
        <taxon>Brassicaceae</taxon>
        <taxon>Camelineae</taxon>
        <taxon>Arabidopsis</taxon>
    </lineage>
</organism>
<name>PBL15_ARATH</name>
<keyword id="KW-0067">ATP-binding</keyword>
<keyword id="KW-1003">Cell membrane</keyword>
<keyword id="KW-0418">Kinase</keyword>
<keyword id="KW-0472">Membrane</keyword>
<keyword id="KW-0547">Nucleotide-binding</keyword>
<keyword id="KW-0597">Phosphoprotein</keyword>
<keyword id="KW-0611">Plant defense</keyword>
<keyword id="KW-1185">Reference proteome</keyword>
<keyword id="KW-0723">Serine/threonine-protein kinase</keyword>
<keyword id="KW-0808">Transferase</keyword>
<comment type="function">
    <text evidence="1">May be involved in plant defense signaling.</text>
</comment>
<comment type="catalytic activity">
    <reaction evidence="8">
        <text>L-seryl-[protein] + ATP = O-phospho-L-seryl-[protein] + ADP + H(+)</text>
        <dbReference type="Rhea" id="RHEA:17989"/>
        <dbReference type="Rhea" id="RHEA-COMP:9863"/>
        <dbReference type="Rhea" id="RHEA-COMP:11604"/>
        <dbReference type="ChEBI" id="CHEBI:15378"/>
        <dbReference type="ChEBI" id="CHEBI:29999"/>
        <dbReference type="ChEBI" id="CHEBI:30616"/>
        <dbReference type="ChEBI" id="CHEBI:83421"/>
        <dbReference type="ChEBI" id="CHEBI:456216"/>
        <dbReference type="EC" id="2.7.11.1"/>
    </reaction>
</comment>
<comment type="catalytic activity">
    <reaction evidence="8">
        <text>L-threonyl-[protein] + ATP = O-phospho-L-threonyl-[protein] + ADP + H(+)</text>
        <dbReference type="Rhea" id="RHEA:46608"/>
        <dbReference type="Rhea" id="RHEA-COMP:11060"/>
        <dbReference type="Rhea" id="RHEA-COMP:11605"/>
        <dbReference type="ChEBI" id="CHEBI:15378"/>
        <dbReference type="ChEBI" id="CHEBI:30013"/>
        <dbReference type="ChEBI" id="CHEBI:30616"/>
        <dbReference type="ChEBI" id="CHEBI:61977"/>
        <dbReference type="ChEBI" id="CHEBI:456216"/>
        <dbReference type="EC" id="2.7.11.1"/>
    </reaction>
</comment>
<comment type="subunit">
    <text evidence="5">Interacts with the Xanthomonas campestris effector XopAC/AvrAC.</text>
</comment>
<comment type="subcellular location">
    <subcellularLocation>
        <location evidence="2">Cell membrane</location>
    </subcellularLocation>
</comment>
<comment type="similarity">
    <text evidence="3">Belongs to the protein kinase superfamily. Ser/Thr protein kinase family.</text>
</comment>
<feature type="chain" id="PRO_0000438609" description="Probable serine/threonine-protein kinase PBL15">
    <location>
        <begin position="1"/>
        <end position="424"/>
    </location>
</feature>
<feature type="domain" description="Protein kinase" evidence="3">
    <location>
        <begin position="99"/>
        <end position="380"/>
    </location>
</feature>
<feature type="region of interest" description="Disordered" evidence="4">
    <location>
        <begin position="390"/>
        <end position="424"/>
    </location>
</feature>
<feature type="active site" description="Proton acceptor" evidence="3">
    <location>
        <position position="229"/>
    </location>
</feature>
<feature type="binding site" evidence="3">
    <location>
        <begin position="105"/>
        <end position="113"/>
    </location>
    <ligand>
        <name>ATP</name>
        <dbReference type="ChEBI" id="CHEBI:30616"/>
    </ligand>
</feature>
<feature type="binding site" evidence="3">
    <location>
        <position position="134"/>
    </location>
    <ligand>
        <name>ATP</name>
        <dbReference type="ChEBI" id="CHEBI:30616"/>
    </ligand>
</feature>
<feature type="modified residue" description="Phosphotyrosine" evidence="1">
    <location>
        <position position="179"/>
    </location>
</feature>
<feature type="modified residue" description="Phosphoserine" evidence="1">
    <location>
        <position position="233"/>
    </location>
</feature>
<feature type="modified residue" description="Phosphothreonine" evidence="1">
    <location>
        <position position="264"/>
    </location>
</feature>
<feature type="modified residue" description="Phosphothreonine" evidence="1">
    <location>
        <position position="269"/>
    </location>
</feature>
<feature type="modified residue" description="Phosphotyrosine" evidence="1">
    <location>
        <position position="277"/>
    </location>
</feature>
<reference key="1">
    <citation type="journal article" date="2000" name="Nature">
        <title>Sequence and analysis of chromosome 1 of the plant Arabidopsis thaliana.</title>
        <authorList>
            <person name="Theologis A."/>
            <person name="Ecker J.R."/>
            <person name="Palm C.J."/>
            <person name="Federspiel N.A."/>
            <person name="Kaul S."/>
            <person name="White O."/>
            <person name="Alonso J."/>
            <person name="Altafi H."/>
            <person name="Araujo R."/>
            <person name="Bowman C.L."/>
            <person name="Brooks S.Y."/>
            <person name="Buehler E."/>
            <person name="Chan A."/>
            <person name="Chao Q."/>
            <person name="Chen H."/>
            <person name="Cheuk R.F."/>
            <person name="Chin C.W."/>
            <person name="Chung M.K."/>
            <person name="Conn L."/>
            <person name="Conway A.B."/>
            <person name="Conway A.R."/>
            <person name="Creasy T.H."/>
            <person name="Dewar K."/>
            <person name="Dunn P."/>
            <person name="Etgu P."/>
            <person name="Feldblyum T.V."/>
            <person name="Feng J.-D."/>
            <person name="Fong B."/>
            <person name="Fujii C.Y."/>
            <person name="Gill J.E."/>
            <person name="Goldsmith A.D."/>
            <person name="Haas B."/>
            <person name="Hansen N.F."/>
            <person name="Hughes B."/>
            <person name="Huizar L."/>
            <person name="Hunter J.L."/>
            <person name="Jenkins J."/>
            <person name="Johnson-Hopson C."/>
            <person name="Khan S."/>
            <person name="Khaykin E."/>
            <person name="Kim C.J."/>
            <person name="Koo H.L."/>
            <person name="Kremenetskaia I."/>
            <person name="Kurtz D.B."/>
            <person name="Kwan A."/>
            <person name="Lam B."/>
            <person name="Langin-Hooper S."/>
            <person name="Lee A."/>
            <person name="Lee J.M."/>
            <person name="Lenz C.A."/>
            <person name="Li J.H."/>
            <person name="Li Y.-P."/>
            <person name="Lin X."/>
            <person name="Liu S.X."/>
            <person name="Liu Z.A."/>
            <person name="Luros J.S."/>
            <person name="Maiti R."/>
            <person name="Marziali A."/>
            <person name="Militscher J."/>
            <person name="Miranda M."/>
            <person name="Nguyen M."/>
            <person name="Nierman W.C."/>
            <person name="Osborne B.I."/>
            <person name="Pai G."/>
            <person name="Peterson J."/>
            <person name="Pham P.K."/>
            <person name="Rizzo M."/>
            <person name="Rooney T."/>
            <person name="Rowley D."/>
            <person name="Sakano H."/>
            <person name="Salzberg S.L."/>
            <person name="Schwartz J.R."/>
            <person name="Shinn P."/>
            <person name="Southwick A.M."/>
            <person name="Sun H."/>
            <person name="Tallon L.J."/>
            <person name="Tambunga G."/>
            <person name="Toriumi M.J."/>
            <person name="Town C.D."/>
            <person name="Utterback T."/>
            <person name="Van Aken S."/>
            <person name="Vaysberg M."/>
            <person name="Vysotskaia V.S."/>
            <person name="Walker M."/>
            <person name="Wu D."/>
            <person name="Yu G."/>
            <person name="Fraser C.M."/>
            <person name="Venter J.C."/>
            <person name="Davis R.W."/>
        </authorList>
    </citation>
    <scope>NUCLEOTIDE SEQUENCE [LARGE SCALE GENOMIC DNA]</scope>
    <source>
        <strain>cv. Columbia</strain>
    </source>
</reference>
<reference key="2">
    <citation type="journal article" date="2017" name="Plant J.">
        <title>Araport11: a complete reannotation of the Arabidopsis thaliana reference genome.</title>
        <authorList>
            <person name="Cheng C.Y."/>
            <person name="Krishnakumar V."/>
            <person name="Chan A.P."/>
            <person name="Thibaud-Nissen F."/>
            <person name="Schobel S."/>
            <person name="Town C.D."/>
        </authorList>
    </citation>
    <scope>GENOME REANNOTATION</scope>
    <source>
        <strain>cv. Columbia</strain>
    </source>
</reference>
<reference key="3">
    <citation type="journal article" date="2003" name="Science">
        <title>Empirical analysis of transcriptional activity in the Arabidopsis genome.</title>
        <authorList>
            <person name="Yamada K."/>
            <person name="Lim J."/>
            <person name="Dale J.M."/>
            <person name="Chen H."/>
            <person name="Shinn P."/>
            <person name="Palm C.J."/>
            <person name="Southwick A.M."/>
            <person name="Wu H.C."/>
            <person name="Kim C.J."/>
            <person name="Nguyen M."/>
            <person name="Pham P.K."/>
            <person name="Cheuk R.F."/>
            <person name="Karlin-Newmann G."/>
            <person name="Liu S.X."/>
            <person name="Lam B."/>
            <person name="Sakano H."/>
            <person name="Wu T."/>
            <person name="Yu G."/>
            <person name="Miranda M."/>
            <person name="Quach H.L."/>
            <person name="Tripp M."/>
            <person name="Chang C.H."/>
            <person name="Lee J.M."/>
            <person name="Toriumi M.J."/>
            <person name="Chan M.M."/>
            <person name="Tang C.C."/>
            <person name="Onodera C.S."/>
            <person name="Deng J.M."/>
            <person name="Akiyama K."/>
            <person name="Ansari Y."/>
            <person name="Arakawa T."/>
            <person name="Banh J."/>
            <person name="Banno F."/>
            <person name="Bowser L."/>
            <person name="Brooks S.Y."/>
            <person name="Carninci P."/>
            <person name="Chao Q."/>
            <person name="Choy N."/>
            <person name="Enju A."/>
            <person name="Goldsmith A.D."/>
            <person name="Gurjal M."/>
            <person name="Hansen N.F."/>
            <person name="Hayashizaki Y."/>
            <person name="Johnson-Hopson C."/>
            <person name="Hsuan V.W."/>
            <person name="Iida K."/>
            <person name="Karnes M."/>
            <person name="Khan S."/>
            <person name="Koesema E."/>
            <person name="Ishida J."/>
            <person name="Jiang P.X."/>
            <person name="Jones T."/>
            <person name="Kawai J."/>
            <person name="Kamiya A."/>
            <person name="Meyers C."/>
            <person name="Nakajima M."/>
            <person name="Narusaka M."/>
            <person name="Seki M."/>
            <person name="Sakurai T."/>
            <person name="Satou M."/>
            <person name="Tamse R."/>
            <person name="Vaysberg M."/>
            <person name="Wallender E.K."/>
            <person name="Wong C."/>
            <person name="Yamamura Y."/>
            <person name="Yuan S."/>
            <person name="Shinozaki K."/>
            <person name="Davis R.W."/>
            <person name="Theologis A."/>
            <person name="Ecker J.R."/>
        </authorList>
    </citation>
    <scope>NUCLEOTIDE SEQUENCE [LARGE SCALE MRNA]</scope>
    <source>
        <strain>cv. Columbia</strain>
    </source>
</reference>
<reference key="4">
    <citation type="journal article" date="2010" name="Cell Host Microbe">
        <title>Receptor-like cytoplasmic kinases integrate signaling from multiple plant immune receptors and are targeted by a Pseudomonas syringae effector.</title>
        <authorList>
            <person name="Zhang J."/>
            <person name="Li W."/>
            <person name="Xiang T."/>
            <person name="Liu Z."/>
            <person name="Laluk K."/>
            <person name="Ding X."/>
            <person name="Zou Y."/>
            <person name="Gao M."/>
            <person name="Zhang X."/>
            <person name="Chen S."/>
            <person name="Mengiste T."/>
            <person name="Zhang Y."/>
            <person name="Zhou J.M."/>
        </authorList>
    </citation>
    <scope>GENE FAMILY</scope>
    <scope>NOMENCLATURE</scope>
</reference>
<reference key="5">
    <citation type="journal article" date="2013" name="PLoS ONE">
        <title>xopAC-triggered immunity against Xanthomonas depends on Arabidopsis receptor-like cytoplasmic kinase genes PBL2 and RIPK.</title>
        <authorList>
            <person name="Guy E."/>
            <person name="Lautier M."/>
            <person name="Chabannes M."/>
            <person name="Roux B."/>
            <person name="Lauber E."/>
            <person name="Arlat M."/>
            <person name="Noel L.D."/>
        </authorList>
    </citation>
    <scope>INTERACTION WITH XANTHOMONAS CAMPESTRIS XOPAC/AVRAC</scope>
</reference>
<accession>Q9SY91</accession>
<protein>
    <recommendedName>
        <fullName evidence="8">Probable serine/threonine-protein kinase PBL15</fullName>
        <ecNumber evidence="8">2.7.11.1</ecNumber>
    </recommendedName>
    <alternativeName>
        <fullName evidence="6">PBS1-like protein 15</fullName>
    </alternativeName>
</protein>